<dbReference type="EC" id="2.3.1.47"/>
<dbReference type="EMBL" id="CP000580">
    <property type="protein sequence ID" value="ABN98873.1"/>
    <property type="molecule type" value="Genomic_DNA"/>
</dbReference>
<dbReference type="SMR" id="A3Q146"/>
<dbReference type="KEGG" id="mjl:Mjls_3094"/>
<dbReference type="HOGENOM" id="CLU_015846_11_2_11"/>
<dbReference type="BioCyc" id="MSP164757:G1G8C-3119-MONOMER"/>
<dbReference type="UniPathway" id="UPA00078"/>
<dbReference type="GO" id="GO:0008710">
    <property type="term" value="F:8-amino-7-oxononanoate synthase activity"/>
    <property type="evidence" value="ECO:0007669"/>
    <property type="project" value="UniProtKB-EC"/>
</dbReference>
<dbReference type="GO" id="GO:0030170">
    <property type="term" value="F:pyridoxal phosphate binding"/>
    <property type="evidence" value="ECO:0007669"/>
    <property type="project" value="InterPro"/>
</dbReference>
<dbReference type="GO" id="GO:0009102">
    <property type="term" value="P:biotin biosynthetic process"/>
    <property type="evidence" value="ECO:0007669"/>
    <property type="project" value="UniProtKB-UniPathway"/>
</dbReference>
<dbReference type="Gene3D" id="3.90.1150.10">
    <property type="entry name" value="Aspartate Aminotransferase, domain 1"/>
    <property type="match status" value="1"/>
</dbReference>
<dbReference type="Gene3D" id="3.40.640.10">
    <property type="entry name" value="Type I PLP-dependent aspartate aminotransferase-like (Major domain)"/>
    <property type="match status" value="1"/>
</dbReference>
<dbReference type="InterPro" id="IPR001917">
    <property type="entry name" value="Aminotrans_II_pyridoxalP_BS"/>
</dbReference>
<dbReference type="InterPro" id="IPR004839">
    <property type="entry name" value="Aminotransferase_I/II_large"/>
</dbReference>
<dbReference type="InterPro" id="IPR050087">
    <property type="entry name" value="AON_synthase_class-II"/>
</dbReference>
<dbReference type="InterPro" id="IPR015424">
    <property type="entry name" value="PyrdxlP-dep_Trfase"/>
</dbReference>
<dbReference type="InterPro" id="IPR015421">
    <property type="entry name" value="PyrdxlP-dep_Trfase_major"/>
</dbReference>
<dbReference type="InterPro" id="IPR015422">
    <property type="entry name" value="PyrdxlP-dep_Trfase_small"/>
</dbReference>
<dbReference type="PANTHER" id="PTHR13693:SF100">
    <property type="entry name" value="8-AMINO-7-OXONONANOATE SYNTHASE"/>
    <property type="match status" value="1"/>
</dbReference>
<dbReference type="PANTHER" id="PTHR13693">
    <property type="entry name" value="CLASS II AMINOTRANSFERASE/8-AMINO-7-OXONONANOATE SYNTHASE"/>
    <property type="match status" value="1"/>
</dbReference>
<dbReference type="Pfam" id="PF00155">
    <property type="entry name" value="Aminotran_1_2"/>
    <property type="match status" value="1"/>
</dbReference>
<dbReference type="SUPFAM" id="SSF53383">
    <property type="entry name" value="PLP-dependent transferases"/>
    <property type="match status" value="1"/>
</dbReference>
<dbReference type="PROSITE" id="PS00599">
    <property type="entry name" value="AA_TRANSFER_CLASS_2"/>
    <property type="match status" value="1"/>
</dbReference>
<gene>
    <name type="ordered locus">Mjls_3094</name>
</gene>
<organism>
    <name type="scientific">Mycobacterium sp. (strain JLS)</name>
    <dbReference type="NCBI Taxonomy" id="164757"/>
    <lineage>
        <taxon>Bacteria</taxon>
        <taxon>Bacillati</taxon>
        <taxon>Actinomycetota</taxon>
        <taxon>Actinomycetes</taxon>
        <taxon>Mycobacteriales</taxon>
        <taxon>Mycobacteriaceae</taxon>
        <taxon>Mycobacterium</taxon>
    </lineage>
</organism>
<proteinExistence type="inferred from homology"/>
<name>BIOF_MYCSJ</name>
<comment type="function">
    <text evidence="1">Catalyzes the decarboxylative condensation of pimeloyl-[acyl-carrier protein] and L-alanine to produce 8-amino-7-oxononanoate (AON), [acyl-carrier protein], and carbon dioxide.</text>
</comment>
<comment type="catalytic activity">
    <reaction>
        <text>6-carboxyhexanoyl-[ACP] + L-alanine + H(+) = (8S)-8-amino-7-oxononanoate + holo-[ACP] + CO2</text>
        <dbReference type="Rhea" id="RHEA:42288"/>
        <dbReference type="Rhea" id="RHEA-COMP:9685"/>
        <dbReference type="Rhea" id="RHEA-COMP:9955"/>
        <dbReference type="ChEBI" id="CHEBI:15378"/>
        <dbReference type="ChEBI" id="CHEBI:16526"/>
        <dbReference type="ChEBI" id="CHEBI:57972"/>
        <dbReference type="ChEBI" id="CHEBI:64479"/>
        <dbReference type="ChEBI" id="CHEBI:78846"/>
        <dbReference type="ChEBI" id="CHEBI:149468"/>
        <dbReference type="EC" id="2.3.1.47"/>
    </reaction>
</comment>
<comment type="cofactor">
    <cofactor evidence="1">
        <name>pyridoxal 5'-phosphate</name>
        <dbReference type="ChEBI" id="CHEBI:597326"/>
    </cofactor>
</comment>
<comment type="pathway">
    <text>Cofactor biosynthesis; biotin biosynthesis.</text>
</comment>
<comment type="subunit">
    <text evidence="1">Homodimer.</text>
</comment>
<comment type="similarity">
    <text evidence="2">Belongs to the class-II pyridoxal-phosphate-dependent aminotransferase family. BioF subfamily.</text>
</comment>
<sequence>MTRAGLSPLAWLDEVADQRRAAGLRRALRTRPAGGTAVDLASNDYLGLSTHPRVVEGAVRAVREWGAGSTGSRLVTGNTELHEGFEQALAAFTGAESALVFSSGYTANLGAVVALSGPGSLLVSDALTHASLVDACRLSRARVVVTPHRDVTAIETALATRDEQRAVVVTDSVFSADGVLAPLRDIHDVCRRHGALLIVDEAHGLGVRGTGGRGLLDEVGLAGAPDVVMTTTLSKALGSQGGVVLGPLAVRDHLIDAARPFIFDTGLAPAAVGAAWAALEVLVDEPSRARAVLDNAAALAQACDVPARPDSAVVSVILGEPEVALAAATACLEQGLRVGCFRPPTVPAGTSRLRLTARASLTDDDLDTARRVLADVLTAARR</sequence>
<feature type="chain" id="PRO_0000381040" description="8-amino-7-oxononanoate synthase">
    <location>
        <begin position="1"/>
        <end position="382"/>
    </location>
</feature>
<feature type="binding site" evidence="1">
    <location>
        <position position="26"/>
    </location>
    <ligand>
        <name>substrate</name>
    </ligand>
</feature>
<feature type="binding site" evidence="1">
    <location>
        <begin position="104"/>
        <end position="105"/>
    </location>
    <ligand>
        <name>pyridoxal 5'-phosphate</name>
        <dbReference type="ChEBI" id="CHEBI:597326"/>
    </ligand>
</feature>
<feature type="binding site" evidence="1">
    <location>
        <position position="129"/>
    </location>
    <ligand>
        <name>substrate</name>
    </ligand>
</feature>
<feature type="binding site" evidence="1">
    <location>
        <position position="175"/>
    </location>
    <ligand>
        <name>pyridoxal 5'-phosphate</name>
        <dbReference type="ChEBI" id="CHEBI:597326"/>
    </ligand>
</feature>
<feature type="binding site" evidence="1">
    <location>
        <begin position="200"/>
        <end position="203"/>
    </location>
    <ligand>
        <name>pyridoxal 5'-phosphate</name>
        <dbReference type="ChEBI" id="CHEBI:597326"/>
    </ligand>
</feature>
<feature type="binding site" evidence="1">
    <location>
        <begin position="232"/>
        <end position="235"/>
    </location>
    <ligand>
        <name>pyridoxal 5'-phosphate</name>
        <dbReference type="ChEBI" id="CHEBI:597326"/>
    </ligand>
</feature>
<feature type="binding site" evidence="1">
    <location>
        <position position="345"/>
    </location>
    <ligand>
        <name>substrate</name>
    </ligand>
</feature>
<feature type="modified residue" description="N6-(pyridoxal phosphate)lysine" evidence="1">
    <location>
        <position position="235"/>
    </location>
</feature>
<protein>
    <recommendedName>
        <fullName>8-amino-7-oxononanoate synthase</fullName>
        <shortName>AONS</shortName>
        <ecNumber>2.3.1.47</ecNumber>
    </recommendedName>
    <alternativeName>
        <fullName>7-keto-8-amino-pelargonic acid synthase</fullName>
        <shortName>7-KAP synthase</shortName>
        <shortName>KAPA synthase</shortName>
    </alternativeName>
    <alternativeName>
        <fullName>8-amino-7-ketopelargonate synthase</fullName>
    </alternativeName>
    <alternativeName>
        <fullName>Alpha-oxoamine synthase</fullName>
    </alternativeName>
</protein>
<evidence type="ECO:0000250" key="1"/>
<evidence type="ECO:0000305" key="2"/>
<keyword id="KW-0012">Acyltransferase</keyword>
<keyword id="KW-0093">Biotin biosynthesis</keyword>
<keyword id="KW-0663">Pyridoxal phosphate</keyword>
<keyword id="KW-0808">Transferase</keyword>
<accession>A3Q146</accession>
<reference key="1">
    <citation type="submission" date="2007-02" db="EMBL/GenBank/DDBJ databases">
        <title>Complete sequence of Mycobacterium sp. JLS.</title>
        <authorList>
            <consortium name="US DOE Joint Genome Institute"/>
            <person name="Copeland A."/>
            <person name="Lucas S."/>
            <person name="Lapidus A."/>
            <person name="Barry K."/>
            <person name="Detter J.C."/>
            <person name="Glavina del Rio T."/>
            <person name="Hammon N."/>
            <person name="Israni S."/>
            <person name="Dalin E."/>
            <person name="Tice H."/>
            <person name="Pitluck S."/>
            <person name="Chain P."/>
            <person name="Malfatti S."/>
            <person name="Shin M."/>
            <person name="Vergez L."/>
            <person name="Schmutz J."/>
            <person name="Larimer F."/>
            <person name="Land M."/>
            <person name="Hauser L."/>
            <person name="Kyrpides N."/>
            <person name="Mikhailova N."/>
            <person name="Miller C.D."/>
            <person name="Anderson A.J."/>
            <person name="Sims R.C."/>
            <person name="Richardson P."/>
        </authorList>
    </citation>
    <scope>NUCLEOTIDE SEQUENCE [LARGE SCALE GENOMIC DNA]</scope>
    <source>
        <strain>JLS</strain>
    </source>
</reference>